<organism>
    <name type="scientific">Homo sapiens</name>
    <name type="common">Human</name>
    <dbReference type="NCBI Taxonomy" id="9606"/>
    <lineage>
        <taxon>Eukaryota</taxon>
        <taxon>Metazoa</taxon>
        <taxon>Chordata</taxon>
        <taxon>Craniata</taxon>
        <taxon>Vertebrata</taxon>
        <taxon>Euteleostomi</taxon>
        <taxon>Mammalia</taxon>
        <taxon>Eutheria</taxon>
        <taxon>Euarchontoglires</taxon>
        <taxon>Primates</taxon>
        <taxon>Haplorrhini</taxon>
        <taxon>Catarrhini</taxon>
        <taxon>Hominidae</taxon>
        <taxon>Homo</taxon>
    </lineage>
</organism>
<proteinExistence type="evidence at protein level"/>
<keyword id="KW-0025">Alternative splicing</keyword>
<keyword id="KW-0175">Coiled coil</keyword>
<keyword id="KW-1267">Proteomics identification</keyword>
<keyword id="KW-1185">Reference proteome</keyword>
<sequence>MFTLSLLSRGHGKLGQDKQKLEVYFEPEDYLNWRSPEDYVPVSKPQDKNNASQHSWSLFLPKTFSTRKGALILYSEGFAISAWTPKERRKGPYCPRGPWRKLDLELHTLQDLKEAILAYGRQQGEQDRAWQPYLHFRSQLESQAQRQIQPGHSAKRYLRGLLRTWPPDAMYRLWCAGYIKDSVLLQDSQLNVPKKLRPQQDLSGVPPKYHLLPVFPSFWIQQGKSFEQRQQGLDEGEAGAAGHVDQGPLAKNHGSQGTRLPPRRKQPWQEDETQAEDTSIENHLCLYASKESYNEKTQQTSRKAFGHGRIDHSWLPSDKSHITFCGGAFPNRKADLSDKQRNVKLHKARSSHLLQVLPAERSLFPPVASATGSRIITPGEVKKKKAPKALKLPPISEEPPRVLEPLKSQFKANEPPTELFILPVEIHYHTKQPPKEKAHRRGAPHPESEPESSEESTPVWRPPLKHASLETPWELTVHLPVDASRDTLSPQGSSSLPPASLGNLTLKGSKARHTRVHSQGKGVWKGDDDAPPHDVAPPLDLLPPIKGKKSPESQKGVDSPRTSDHNSPPSLPNMRVPRRALPAAQEDSSDPTLGHFLLGPDGEKVCLSLPGHTQTEALPSGKAYESVNSNISHEEEGPSSQHFLKANTEPRANLHMNLYETSPLTQTTEKQGAQQSLEAAAQKTGEPQSCINKALICSNRKEFYTRKLHIDMTPFLKESGNALDYQEEAGRPLRETHHNDQDPEPRSMTLDSPRASRTEHIQTPEADIVQKVGRDYDVHHLHRGLLGYGPESPERLSAVYTSLLPREREGKAEPRLFSQETSANISHERDLINEAKRKEKPKKDKTKGPKSEREGKVYGQAEAAIGKSKDSKAKKKLEKKTRPQRKRTQKERNLEIAAELSGPDVSYEETEDTSNRGSFASDSFVEDPWLSPKYDAQESQVSLDGRSSPSQIATVTGNMESKEERRCEDPSKALLTKREQEKASWDRLRAERAEMRWLEVEKKRREQEEQRQLQQEQLERAKKMEEELELEQQRRTEEIRLRKQRLQEEQQRQEEEERKQQLRLKAAQERARQQQEEFRRKLRELQRKKQQEEAERAEAEKQRQEELEMQLEEEQKHLMEMAEEERLEYQRRKQEAEEKARLEAEERRQKEEEAARLALEEATKQAQEQARYWIFGQQLP</sequence>
<evidence type="ECO:0000255" key="1"/>
<evidence type="ECO:0000256" key="2">
    <source>
        <dbReference type="SAM" id="MobiDB-lite"/>
    </source>
</evidence>
<evidence type="ECO:0000305" key="3"/>
<evidence type="ECO:0000312" key="4">
    <source>
        <dbReference type="HGNC" id="HGNC:51250"/>
    </source>
</evidence>
<gene>
    <name evidence="4" type="primary">KIAA2012</name>
</gene>
<feature type="chain" id="PRO_0000332200" description="Uncharacterized protein KIAA2012">
    <location>
        <begin position="1"/>
        <end position="1180"/>
    </location>
</feature>
<feature type="region of interest" description="Disordered" evidence="2">
    <location>
        <begin position="229"/>
        <end position="280"/>
    </location>
</feature>
<feature type="region of interest" description="Disordered" evidence="2">
    <location>
        <begin position="431"/>
        <end position="465"/>
    </location>
</feature>
<feature type="region of interest" description="Disordered" evidence="2">
    <location>
        <begin position="484"/>
        <end position="575"/>
    </location>
</feature>
<feature type="region of interest" description="Disordered" evidence="2">
    <location>
        <begin position="730"/>
        <end position="758"/>
    </location>
</feature>
<feature type="region of interest" description="Disordered" evidence="2">
    <location>
        <begin position="810"/>
        <end position="986"/>
    </location>
</feature>
<feature type="region of interest" description="Disordered" evidence="2">
    <location>
        <begin position="1045"/>
        <end position="1109"/>
    </location>
</feature>
<feature type="region of interest" description="Disordered" evidence="2">
    <location>
        <begin position="1125"/>
        <end position="1152"/>
    </location>
</feature>
<feature type="coiled-coil region" evidence="1">
    <location>
        <begin position="988"/>
        <end position="1171"/>
    </location>
</feature>
<feature type="compositionally biased region" description="Acidic residues" evidence="2">
    <location>
        <begin position="269"/>
        <end position="279"/>
    </location>
</feature>
<feature type="compositionally biased region" description="Basic residues" evidence="2">
    <location>
        <begin position="431"/>
        <end position="443"/>
    </location>
</feature>
<feature type="compositionally biased region" description="Polar residues" evidence="2">
    <location>
        <begin position="486"/>
        <end position="497"/>
    </location>
</feature>
<feature type="compositionally biased region" description="Basic residues" evidence="2">
    <location>
        <begin position="509"/>
        <end position="518"/>
    </location>
</feature>
<feature type="compositionally biased region" description="Basic and acidic residues" evidence="2">
    <location>
        <begin position="730"/>
        <end position="745"/>
    </location>
</feature>
<feature type="compositionally biased region" description="Basic and acidic residues" evidence="2">
    <location>
        <begin position="826"/>
        <end position="837"/>
    </location>
</feature>
<feature type="compositionally biased region" description="Basic and acidic residues" evidence="2">
    <location>
        <begin position="846"/>
        <end position="856"/>
    </location>
</feature>
<feature type="compositionally biased region" description="Basic residues" evidence="2">
    <location>
        <begin position="872"/>
        <end position="889"/>
    </location>
</feature>
<feature type="compositionally biased region" description="Polar residues" evidence="2">
    <location>
        <begin position="937"/>
        <end position="959"/>
    </location>
</feature>
<feature type="compositionally biased region" description="Basic and acidic residues" evidence="2">
    <location>
        <begin position="960"/>
        <end position="986"/>
    </location>
</feature>
<feature type="compositionally biased region" description="Basic and acidic residues" evidence="2">
    <location>
        <begin position="1045"/>
        <end position="1106"/>
    </location>
</feature>
<feature type="compositionally biased region" description="Basic and acidic residues" evidence="2">
    <location>
        <begin position="1127"/>
        <end position="1152"/>
    </location>
</feature>
<feature type="splice variant" id="VSP_057140" description="In isoform 2.">
    <location>
        <begin position="1"/>
        <end position="627"/>
    </location>
</feature>
<feature type="splice variant" id="VSP_057141" description="In isoform 2.">
    <original>NSNISHEEEGPSSQHFLK</original>
    <variation>MRSRSDHLDLFSSLIFTT</variation>
    <location>
        <begin position="628"/>
        <end position="645"/>
    </location>
</feature>
<comment type="alternative products">
    <event type="alternative splicing"/>
    <isoform>
        <id>Q0VF49-1</id>
        <name>1</name>
        <sequence type="displayed"/>
    </isoform>
    <isoform>
        <id>Q0VF49-2</id>
        <name>2</name>
        <sequence type="described" ref="VSP_057140 VSP_057141"/>
    </isoform>
</comment>
<comment type="sequence caution" evidence="3">
    <conflict type="erroneous initiation">
        <sequence resource="EMBL-CDS" id="BAC23108"/>
    </conflict>
    <text>Extended N-terminus.</text>
</comment>
<name>K2012_HUMAN</name>
<reference key="1">
    <citation type="submission" date="2002-11" db="EMBL/GenBank/DDBJ databases">
        <title>The nucleotide sequence of a long cDNA clone isolated from human.</title>
        <authorList>
            <person name="Nagase T."/>
            <person name="Kikuno R."/>
            <person name="Ohara O."/>
        </authorList>
    </citation>
    <scope>NUCLEOTIDE SEQUENCE [LARGE SCALE MRNA] (ISOFORM 2)</scope>
    <source>
        <tissue>Brain</tissue>
    </source>
</reference>
<reference key="2">
    <citation type="journal article" date="2005" name="Nature">
        <title>Generation and annotation of the DNA sequences of human chromosomes 2 and 4.</title>
        <authorList>
            <person name="Hillier L.W."/>
            <person name="Graves T.A."/>
            <person name="Fulton R.S."/>
            <person name="Fulton L.A."/>
            <person name="Pepin K.H."/>
            <person name="Minx P."/>
            <person name="Wagner-McPherson C."/>
            <person name="Layman D."/>
            <person name="Wylie K."/>
            <person name="Sekhon M."/>
            <person name="Becker M.C."/>
            <person name="Fewell G.A."/>
            <person name="Delehaunty K.D."/>
            <person name="Miner T.L."/>
            <person name="Nash W.E."/>
            <person name="Kremitzki C."/>
            <person name="Oddy L."/>
            <person name="Du H."/>
            <person name="Sun H."/>
            <person name="Bradshaw-Cordum H."/>
            <person name="Ali J."/>
            <person name="Carter J."/>
            <person name="Cordes M."/>
            <person name="Harris A."/>
            <person name="Isak A."/>
            <person name="van Brunt A."/>
            <person name="Nguyen C."/>
            <person name="Du F."/>
            <person name="Courtney L."/>
            <person name="Kalicki J."/>
            <person name="Ozersky P."/>
            <person name="Abbott S."/>
            <person name="Armstrong J."/>
            <person name="Belter E.A."/>
            <person name="Caruso L."/>
            <person name="Cedroni M."/>
            <person name="Cotton M."/>
            <person name="Davidson T."/>
            <person name="Desai A."/>
            <person name="Elliott G."/>
            <person name="Erb T."/>
            <person name="Fronick C."/>
            <person name="Gaige T."/>
            <person name="Haakenson W."/>
            <person name="Haglund K."/>
            <person name="Holmes A."/>
            <person name="Harkins R."/>
            <person name="Kim K."/>
            <person name="Kruchowski S.S."/>
            <person name="Strong C.M."/>
            <person name="Grewal N."/>
            <person name="Goyea E."/>
            <person name="Hou S."/>
            <person name="Levy A."/>
            <person name="Martinka S."/>
            <person name="Mead K."/>
            <person name="McLellan M.D."/>
            <person name="Meyer R."/>
            <person name="Randall-Maher J."/>
            <person name="Tomlinson C."/>
            <person name="Dauphin-Kohlberg S."/>
            <person name="Kozlowicz-Reilly A."/>
            <person name="Shah N."/>
            <person name="Swearengen-Shahid S."/>
            <person name="Snider J."/>
            <person name="Strong J.T."/>
            <person name="Thompson J."/>
            <person name="Yoakum M."/>
            <person name="Leonard S."/>
            <person name="Pearman C."/>
            <person name="Trani L."/>
            <person name="Radionenko M."/>
            <person name="Waligorski J.E."/>
            <person name="Wang C."/>
            <person name="Rock S.M."/>
            <person name="Tin-Wollam A.-M."/>
            <person name="Maupin R."/>
            <person name="Latreille P."/>
            <person name="Wendl M.C."/>
            <person name="Yang S.-P."/>
            <person name="Pohl C."/>
            <person name="Wallis J.W."/>
            <person name="Spieth J."/>
            <person name="Bieri T.A."/>
            <person name="Berkowicz N."/>
            <person name="Nelson J.O."/>
            <person name="Osborne J."/>
            <person name="Ding L."/>
            <person name="Meyer R."/>
            <person name="Sabo A."/>
            <person name="Shotland Y."/>
            <person name="Sinha P."/>
            <person name="Wohldmann P.E."/>
            <person name="Cook L.L."/>
            <person name="Hickenbotham M.T."/>
            <person name="Eldred J."/>
            <person name="Williams D."/>
            <person name="Jones T.A."/>
            <person name="She X."/>
            <person name="Ciccarelli F.D."/>
            <person name="Izaurralde E."/>
            <person name="Taylor J."/>
            <person name="Schmutz J."/>
            <person name="Myers R.M."/>
            <person name="Cox D.R."/>
            <person name="Huang X."/>
            <person name="McPherson J.D."/>
            <person name="Mardis E.R."/>
            <person name="Clifton S.W."/>
            <person name="Warren W.C."/>
            <person name="Chinwalla A.T."/>
            <person name="Eddy S.R."/>
            <person name="Marra M.A."/>
            <person name="Ovcharenko I."/>
            <person name="Furey T.S."/>
            <person name="Miller W."/>
            <person name="Eichler E.E."/>
            <person name="Bork P."/>
            <person name="Suyama M."/>
            <person name="Torrents D."/>
            <person name="Waterston R.H."/>
            <person name="Wilson R.K."/>
        </authorList>
    </citation>
    <scope>NUCLEOTIDE SEQUENCE [LARGE SCALE GENOMIC DNA]</scope>
</reference>
<reference key="3">
    <citation type="journal article" date="2004" name="Genome Res.">
        <title>The status, quality, and expansion of the NIH full-length cDNA project: the Mammalian Gene Collection (MGC).</title>
        <authorList>
            <consortium name="The MGC Project Team"/>
        </authorList>
    </citation>
    <scope>NUCLEOTIDE SEQUENCE [LARGE SCALE MRNA] (ISOFORM 2)</scope>
</reference>
<protein>
    <recommendedName>
        <fullName evidence="3">Uncharacterized protein KIAA2012</fullName>
    </recommendedName>
</protein>
<accession>Q0VF49</accession>
<accession>Q8IVF9</accession>
<dbReference type="EMBL" id="AB095932">
    <property type="protein sequence ID" value="BAC23108.1"/>
    <property type="status" value="ALT_INIT"/>
    <property type="molecule type" value="mRNA"/>
</dbReference>
<dbReference type="EMBL" id="AC069148">
    <property type="status" value="NOT_ANNOTATED_CDS"/>
    <property type="molecule type" value="Genomic_DNA"/>
</dbReference>
<dbReference type="EMBL" id="AC079354">
    <property type="status" value="NOT_ANNOTATED_CDS"/>
    <property type="molecule type" value="Genomic_DNA"/>
</dbReference>
<dbReference type="EMBL" id="BC118982">
    <property type="protein sequence ID" value="AAI18983.1"/>
    <property type="molecule type" value="mRNA"/>
</dbReference>
<dbReference type="SMR" id="Q0VF49"/>
<dbReference type="BioGRID" id="1530199">
    <property type="interactions" value="5"/>
</dbReference>
<dbReference type="FunCoup" id="Q0VF49">
    <property type="interactions" value="1"/>
</dbReference>
<dbReference type="STRING" id="9606.ENSP00000419834"/>
<dbReference type="GlyGen" id="Q0VF49">
    <property type="glycosylation" value="2 sites, 1 N-linked glycan (1 site), 1 O-linked glycan (1 site)"/>
</dbReference>
<dbReference type="iPTMnet" id="Q0VF49"/>
<dbReference type="PhosphoSitePlus" id="Q0VF49"/>
<dbReference type="BioMuta" id="KIAA2012"/>
<dbReference type="DMDM" id="121940491"/>
<dbReference type="jPOST" id="Q0VF49"/>
<dbReference type="MassIVE" id="Q0VF49"/>
<dbReference type="PaxDb" id="9606-ENSP00000437957"/>
<dbReference type="PeptideAtlas" id="Q0VF49"/>
<dbReference type="UCSC" id="uc031rqt.1">
    <molecule id="Q0VF49-1"/>
    <property type="organism name" value="human"/>
</dbReference>
<dbReference type="AGR" id="HGNC:51250"/>
<dbReference type="GeneCards" id="KIAA2012"/>
<dbReference type="HGNC" id="HGNC:51250">
    <property type="gene designation" value="KIAA2012"/>
</dbReference>
<dbReference type="neXtProt" id="NX_Q0VF49"/>
<dbReference type="eggNOG" id="KOG0181">
    <property type="taxonomic scope" value="Eukaryota"/>
</dbReference>
<dbReference type="HOGENOM" id="CLU_296460_0_0_1"/>
<dbReference type="InParanoid" id="Q0VF49"/>
<dbReference type="OrthoDB" id="6162046at2759"/>
<dbReference type="PAN-GO" id="Q0VF49">
    <property type="GO annotations" value="0 GO annotations based on evolutionary models"/>
</dbReference>
<dbReference type="ChiTaRS" id="KIAA2012">
    <property type="organism name" value="human"/>
</dbReference>
<dbReference type="Pharos" id="Q0VF49">
    <property type="development level" value="Tdark"/>
</dbReference>
<dbReference type="PRO" id="PR:Q0VF49"/>
<dbReference type="Proteomes" id="UP000005640">
    <property type="component" value="Unplaced"/>
</dbReference>
<dbReference type="RNAct" id="Q0VF49">
    <property type="molecule type" value="protein"/>
</dbReference>
<dbReference type="InterPro" id="IPR031440">
    <property type="entry name" value="DUF4670"/>
</dbReference>
<dbReference type="PANTHER" id="PTHR21937">
    <property type="entry name" value="CCDC66 DOMAIN-CONTAINING PROTEIN"/>
    <property type="match status" value="1"/>
</dbReference>
<dbReference type="PANTHER" id="PTHR21937:SF5">
    <property type="entry name" value="GENE 973-RELATED"/>
    <property type="match status" value="1"/>
</dbReference>
<dbReference type="Pfam" id="PF15709">
    <property type="entry name" value="DUF4670"/>
    <property type="match status" value="1"/>
</dbReference>